<name>RL36A_CANLF</name>
<proteinExistence type="evidence at protein level"/>
<keyword id="KW-0002">3D-structure</keyword>
<keyword id="KW-0963">Cytoplasm</keyword>
<keyword id="KW-1185">Reference proteome</keyword>
<keyword id="KW-0687">Ribonucleoprotein</keyword>
<keyword id="KW-0689">Ribosomal protein</keyword>
<evidence type="ECO:0000250" key="1">
    <source>
        <dbReference type="UniProtKB" id="P83881"/>
    </source>
</evidence>
<evidence type="ECO:0000256" key="2">
    <source>
        <dbReference type="SAM" id="MobiDB-lite"/>
    </source>
</evidence>
<evidence type="ECO:0000305" key="3"/>
<gene>
    <name type="primary">Rpl36a</name>
    <name type="synonym">Rpl44</name>
</gene>
<reference key="1">
    <citation type="journal article" date="2005" name="Nature">
        <title>Genome sequence, comparative analysis and haplotype structure of the domestic dog.</title>
        <authorList>
            <person name="Lindblad-Toh K."/>
            <person name="Wade C.M."/>
            <person name="Mikkelsen T.S."/>
            <person name="Karlsson E.K."/>
            <person name="Jaffe D.B."/>
            <person name="Kamal M."/>
            <person name="Clamp M."/>
            <person name="Chang J.L."/>
            <person name="Kulbokas E.J. III"/>
            <person name="Zody M.C."/>
            <person name="Mauceli E."/>
            <person name="Xie X."/>
            <person name="Breen M."/>
            <person name="Wayne R.K."/>
            <person name="Ostrander E.A."/>
            <person name="Ponting C.P."/>
            <person name="Galibert F."/>
            <person name="Smith D.R."/>
            <person name="deJong P.J."/>
            <person name="Kirkness E.F."/>
            <person name="Alvarez P."/>
            <person name="Biagi T."/>
            <person name="Brockman W."/>
            <person name="Butler J."/>
            <person name="Chin C.-W."/>
            <person name="Cook A."/>
            <person name="Cuff J."/>
            <person name="Daly M.J."/>
            <person name="DeCaprio D."/>
            <person name="Gnerre S."/>
            <person name="Grabherr M."/>
            <person name="Kellis M."/>
            <person name="Kleber M."/>
            <person name="Bardeleben C."/>
            <person name="Goodstadt L."/>
            <person name="Heger A."/>
            <person name="Hitte C."/>
            <person name="Kim L."/>
            <person name="Koepfli K.-P."/>
            <person name="Parker H.G."/>
            <person name="Pollinger J.P."/>
            <person name="Searle S.M.J."/>
            <person name="Sutter N.B."/>
            <person name="Thomas R."/>
            <person name="Webber C."/>
            <person name="Baldwin J."/>
            <person name="Abebe A."/>
            <person name="Abouelleil A."/>
            <person name="Aftuck L."/>
            <person name="Ait-Zahra M."/>
            <person name="Aldredge T."/>
            <person name="Allen N."/>
            <person name="An P."/>
            <person name="Anderson S."/>
            <person name="Antoine C."/>
            <person name="Arachchi H."/>
            <person name="Aslam A."/>
            <person name="Ayotte L."/>
            <person name="Bachantsang P."/>
            <person name="Barry A."/>
            <person name="Bayul T."/>
            <person name="Benamara M."/>
            <person name="Berlin A."/>
            <person name="Bessette D."/>
            <person name="Blitshteyn B."/>
            <person name="Bloom T."/>
            <person name="Blye J."/>
            <person name="Boguslavskiy L."/>
            <person name="Bonnet C."/>
            <person name="Boukhgalter B."/>
            <person name="Brown A."/>
            <person name="Cahill P."/>
            <person name="Calixte N."/>
            <person name="Camarata J."/>
            <person name="Cheshatsang Y."/>
            <person name="Chu J."/>
            <person name="Citroen M."/>
            <person name="Collymore A."/>
            <person name="Cooke P."/>
            <person name="Dawoe T."/>
            <person name="Daza R."/>
            <person name="Decktor K."/>
            <person name="DeGray S."/>
            <person name="Dhargay N."/>
            <person name="Dooley K."/>
            <person name="Dooley K."/>
            <person name="Dorje P."/>
            <person name="Dorjee K."/>
            <person name="Dorris L."/>
            <person name="Duffey N."/>
            <person name="Dupes A."/>
            <person name="Egbiremolen O."/>
            <person name="Elong R."/>
            <person name="Falk J."/>
            <person name="Farina A."/>
            <person name="Faro S."/>
            <person name="Ferguson D."/>
            <person name="Ferreira P."/>
            <person name="Fisher S."/>
            <person name="FitzGerald M."/>
            <person name="Foley K."/>
            <person name="Foley C."/>
            <person name="Franke A."/>
            <person name="Friedrich D."/>
            <person name="Gage D."/>
            <person name="Garber M."/>
            <person name="Gearin G."/>
            <person name="Giannoukos G."/>
            <person name="Goode T."/>
            <person name="Goyette A."/>
            <person name="Graham J."/>
            <person name="Grandbois E."/>
            <person name="Gyaltsen K."/>
            <person name="Hafez N."/>
            <person name="Hagopian D."/>
            <person name="Hagos B."/>
            <person name="Hall J."/>
            <person name="Healy C."/>
            <person name="Hegarty R."/>
            <person name="Honan T."/>
            <person name="Horn A."/>
            <person name="Houde N."/>
            <person name="Hughes L."/>
            <person name="Hunnicutt L."/>
            <person name="Husby M."/>
            <person name="Jester B."/>
            <person name="Jones C."/>
            <person name="Kamat A."/>
            <person name="Kanga B."/>
            <person name="Kells C."/>
            <person name="Khazanovich D."/>
            <person name="Kieu A.C."/>
            <person name="Kisner P."/>
            <person name="Kumar M."/>
            <person name="Lance K."/>
            <person name="Landers T."/>
            <person name="Lara M."/>
            <person name="Lee W."/>
            <person name="Leger J.-P."/>
            <person name="Lennon N."/>
            <person name="Leuper L."/>
            <person name="LeVine S."/>
            <person name="Liu J."/>
            <person name="Liu X."/>
            <person name="Lokyitsang Y."/>
            <person name="Lokyitsang T."/>
            <person name="Lui A."/>
            <person name="Macdonald J."/>
            <person name="Major J."/>
            <person name="Marabella R."/>
            <person name="Maru K."/>
            <person name="Matthews C."/>
            <person name="McDonough S."/>
            <person name="Mehta T."/>
            <person name="Meldrim J."/>
            <person name="Melnikov A."/>
            <person name="Meneus L."/>
            <person name="Mihalev A."/>
            <person name="Mihova T."/>
            <person name="Miller K."/>
            <person name="Mittelman R."/>
            <person name="Mlenga V."/>
            <person name="Mulrain L."/>
            <person name="Munson G."/>
            <person name="Navidi A."/>
            <person name="Naylor J."/>
            <person name="Nguyen T."/>
            <person name="Nguyen N."/>
            <person name="Nguyen C."/>
            <person name="Nguyen T."/>
            <person name="Nicol R."/>
            <person name="Norbu N."/>
            <person name="Norbu C."/>
            <person name="Novod N."/>
            <person name="Nyima T."/>
            <person name="Olandt P."/>
            <person name="O'Neill B."/>
            <person name="O'Neill K."/>
            <person name="Osman S."/>
            <person name="Oyono L."/>
            <person name="Patti C."/>
            <person name="Perrin D."/>
            <person name="Phunkhang P."/>
            <person name="Pierre F."/>
            <person name="Priest M."/>
            <person name="Rachupka A."/>
            <person name="Raghuraman S."/>
            <person name="Rameau R."/>
            <person name="Ray V."/>
            <person name="Raymond C."/>
            <person name="Rege F."/>
            <person name="Rise C."/>
            <person name="Rogers J."/>
            <person name="Rogov P."/>
            <person name="Sahalie J."/>
            <person name="Settipalli S."/>
            <person name="Sharpe T."/>
            <person name="Shea T."/>
            <person name="Sheehan M."/>
            <person name="Sherpa N."/>
            <person name="Shi J."/>
            <person name="Shih D."/>
            <person name="Sloan J."/>
            <person name="Smith C."/>
            <person name="Sparrow T."/>
            <person name="Stalker J."/>
            <person name="Stange-Thomann N."/>
            <person name="Stavropoulos S."/>
            <person name="Stone C."/>
            <person name="Stone S."/>
            <person name="Sykes S."/>
            <person name="Tchuinga P."/>
            <person name="Tenzing P."/>
            <person name="Tesfaye S."/>
            <person name="Thoulutsang D."/>
            <person name="Thoulutsang Y."/>
            <person name="Topham K."/>
            <person name="Topping I."/>
            <person name="Tsamla T."/>
            <person name="Vassiliev H."/>
            <person name="Venkataraman V."/>
            <person name="Vo A."/>
            <person name="Wangchuk T."/>
            <person name="Wangdi T."/>
            <person name="Weiand M."/>
            <person name="Wilkinson J."/>
            <person name="Wilson A."/>
            <person name="Yadav S."/>
            <person name="Yang S."/>
            <person name="Yang X."/>
            <person name="Young G."/>
            <person name="Yu Q."/>
            <person name="Zainoun J."/>
            <person name="Zembek L."/>
            <person name="Zimmer A."/>
            <person name="Lander E.S."/>
        </authorList>
    </citation>
    <scope>NUCLEOTIDE SEQUENCE [LARGE SCALE GENOMIC DNA]</scope>
    <source>
        <strain>Boxer</strain>
    </source>
</reference>
<reference key="2">
    <citation type="journal article" date="2008" name="Structure">
        <title>Structure of the mammalian 80S ribosome at 8.7 A resolution.</title>
        <authorList>
            <person name="Chandramouli P."/>
            <person name="Topf M."/>
            <person name="Menetret J.F."/>
            <person name="Eswar N."/>
            <person name="Cannone J.J."/>
            <person name="Gutell R.R."/>
            <person name="Sali A."/>
            <person name="Akey C.W."/>
        </authorList>
    </citation>
    <scope>STRUCTURE BY ELECTRON MICROSCOPY (8.70 ANGSTROMS)</scope>
</reference>
<dbReference type="RefSeq" id="NP_001300729.1">
    <property type="nucleotide sequence ID" value="NM_001313800.1"/>
</dbReference>
<dbReference type="PDB" id="4V5Z">
    <property type="method" value="EM"/>
    <property type="resolution" value="8.70 A"/>
    <property type="chains" value="4=1-106"/>
</dbReference>
<dbReference type="PDBsum" id="4V5Z"/>
<dbReference type="SMR" id="D0VWQ4"/>
<dbReference type="FunCoup" id="D0VWQ4">
    <property type="interactions" value="1733"/>
</dbReference>
<dbReference type="STRING" id="9615.ENSCAFP00000026100"/>
<dbReference type="PaxDb" id="9612-ENSCAFP00000034850"/>
<dbReference type="Ensembl" id="ENSCAFT00030001028.1">
    <property type="protein sequence ID" value="ENSCAFP00030000891.1"/>
    <property type="gene ID" value="ENSCAFG00030000628.1"/>
</dbReference>
<dbReference type="GeneID" id="480311"/>
<dbReference type="KEGG" id="cfa:480311"/>
<dbReference type="CTD" id="6166"/>
<dbReference type="eggNOG" id="KOG3464">
    <property type="taxonomic scope" value="Eukaryota"/>
</dbReference>
<dbReference type="HOGENOM" id="CLU_114645_2_1_1"/>
<dbReference type="InParanoid" id="D0VWQ4"/>
<dbReference type="OMA" id="CKKHTIH"/>
<dbReference type="OrthoDB" id="2967263at2759"/>
<dbReference type="TreeFam" id="TF300213"/>
<dbReference type="Proteomes" id="UP000002254">
    <property type="component" value="Unplaced"/>
</dbReference>
<dbReference type="Proteomes" id="UP000694429">
    <property type="component" value="Chromosome 8"/>
</dbReference>
<dbReference type="Proteomes" id="UP000694542">
    <property type="component" value="Unplaced"/>
</dbReference>
<dbReference type="Proteomes" id="UP000805418">
    <property type="component" value="Unplaced"/>
</dbReference>
<dbReference type="GO" id="GO:0022625">
    <property type="term" value="C:cytosolic large ribosomal subunit"/>
    <property type="evidence" value="ECO:0000318"/>
    <property type="project" value="GO_Central"/>
</dbReference>
<dbReference type="GO" id="GO:0003735">
    <property type="term" value="F:structural constituent of ribosome"/>
    <property type="evidence" value="ECO:0007669"/>
    <property type="project" value="InterPro"/>
</dbReference>
<dbReference type="GO" id="GO:0006412">
    <property type="term" value="P:translation"/>
    <property type="evidence" value="ECO:0007669"/>
    <property type="project" value="InterPro"/>
</dbReference>
<dbReference type="FunFam" id="3.10.450.80:FF:000001">
    <property type="entry name" value="60S ribosomal protein L44"/>
    <property type="match status" value="1"/>
</dbReference>
<dbReference type="Gene3D" id="3.10.450.80">
    <property type="match status" value="1"/>
</dbReference>
<dbReference type="InterPro" id="IPR000552">
    <property type="entry name" value="Ribosomal_eL44"/>
</dbReference>
<dbReference type="InterPro" id="IPR053708">
    <property type="entry name" value="Ribosomal_LSU_eL42"/>
</dbReference>
<dbReference type="InterPro" id="IPR011332">
    <property type="entry name" value="Ribosomal_zn-bd"/>
</dbReference>
<dbReference type="PANTHER" id="PTHR10369">
    <property type="entry name" value="60S RIBOSOMAL PROTEIN L36A/L44"/>
    <property type="match status" value="1"/>
</dbReference>
<dbReference type="Pfam" id="PF00935">
    <property type="entry name" value="Ribosomal_L44"/>
    <property type="match status" value="1"/>
</dbReference>
<dbReference type="SUPFAM" id="SSF57829">
    <property type="entry name" value="Zn-binding ribosomal proteins"/>
    <property type="match status" value="1"/>
</dbReference>
<dbReference type="PROSITE" id="PS01172">
    <property type="entry name" value="RIBOSOMAL_L44E"/>
    <property type="match status" value="1"/>
</dbReference>
<protein>
    <recommendedName>
        <fullName evidence="3">Large ribosomal subunit protein eL42</fullName>
    </recommendedName>
    <alternativeName>
        <fullName>60S ribosomal protein L36a</fullName>
    </alternativeName>
    <alternativeName>
        <fullName>60S ribosomal protein L44</fullName>
    </alternativeName>
</protein>
<organism>
    <name type="scientific">Canis lupus familiaris</name>
    <name type="common">Dog</name>
    <name type="synonym">Canis familiaris</name>
    <dbReference type="NCBI Taxonomy" id="9615"/>
    <lineage>
        <taxon>Eukaryota</taxon>
        <taxon>Metazoa</taxon>
        <taxon>Chordata</taxon>
        <taxon>Craniata</taxon>
        <taxon>Vertebrata</taxon>
        <taxon>Euteleostomi</taxon>
        <taxon>Mammalia</taxon>
        <taxon>Eutheria</taxon>
        <taxon>Laurasiatheria</taxon>
        <taxon>Carnivora</taxon>
        <taxon>Caniformia</taxon>
        <taxon>Canidae</taxon>
        <taxon>Canis</taxon>
    </lineage>
</organism>
<feature type="chain" id="PRO_0000405592" description="Large ribosomal subunit protein eL42">
    <location>
        <begin position="1"/>
        <end position="106"/>
    </location>
</feature>
<feature type="region of interest" description="Disordered" evidence="2">
    <location>
        <begin position="34"/>
        <end position="53"/>
    </location>
</feature>
<comment type="function">
    <text evidence="1">Component of the large ribosomal subunit. The ribosome is a large ribonucleoprotein complex responsible for the synthesis of proteins in the cell.</text>
</comment>
<comment type="subunit">
    <text evidence="1">Component of the large ribosomal subunit.</text>
</comment>
<comment type="subcellular location">
    <subcellularLocation>
        <location evidence="1">Cytoplasm</location>
    </subcellularLocation>
</comment>
<comment type="similarity">
    <text evidence="3">Belongs to the eukaryotic ribosomal protein eL42 family.</text>
</comment>
<accession>D0VWQ4</accession>
<sequence>MVNVPKTRRTFCKKCGKHQPHKVTQYKKGKDSLYAQGKRRYDRKQSGYGGQTKPIFRKKAKTTKKIVLRLECVEPNCRSKRMLAIKRCKHFELGGDKKRKGQVIQF</sequence>